<gene>
    <name type="primary">mmpL5</name>
    <name type="ordered locus">MT0705</name>
</gene>
<dbReference type="EMBL" id="AE000516">
    <property type="protein sequence ID" value="AAK44930.1"/>
    <property type="molecule type" value="Genomic_DNA"/>
</dbReference>
<dbReference type="PIR" id="E70826">
    <property type="entry name" value="E70826"/>
</dbReference>
<dbReference type="RefSeq" id="WP_003898551.1">
    <property type="nucleotide sequence ID" value="NZ_KK341227.1"/>
</dbReference>
<dbReference type="SMR" id="P9WJV0"/>
<dbReference type="KEGG" id="mtc:MT0705"/>
<dbReference type="PATRIC" id="fig|83331.31.peg.751"/>
<dbReference type="HOGENOM" id="CLU_005108_3_2_11"/>
<dbReference type="PHI-base" id="PHI:2741"/>
<dbReference type="Proteomes" id="UP000001020">
    <property type="component" value="Chromosome"/>
</dbReference>
<dbReference type="GO" id="GO:0005886">
    <property type="term" value="C:plasma membrane"/>
    <property type="evidence" value="ECO:0007669"/>
    <property type="project" value="UniProtKB-SubCell"/>
</dbReference>
<dbReference type="FunFam" id="1.20.1640.10:FF:000018">
    <property type="entry name" value="Transmembrane transport protein MmpL10"/>
    <property type="match status" value="1"/>
</dbReference>
<dbReference type="FunFam" id="1.20.1640.10:FF:000020">
    <property type="entry name" value="Transmembrane transport protein MmpL10"/>
    <property type="match status" value="1"/>
</dbReference>
<dbReference type="Gene3D" id="1.20.1640.10">
    <property type="entry name" value="Multidrug efflux transporter AcrB transmembrane domain"/>
    <property type="match status" value="2"/>
</dbReference>
<dbReference type="InterPro" id="IPR004869">
    <property type="entry name" value="MMPL_dom"/>
</dbReference>
<dbReference type="InterPro" id="IPR004707">
    <property type="entry name" value="MmpL_fam"/>
</dbReference>
<dbReference type="InterPro" id="IPR050545">
    <property type="entry name" value="Mycobact_MmpL"/>
</dbReference>
<dbReference type="NCBIfam" id="TIGR00833">
    <property type="entry name" value="actII"/>
    <property type="match status" value="1"/>
</dbReference>
<dbReference type="PANTHER" id="PTHR33406">
    <property type="entry name" value="MEMBRANE PROTEIN MJ1562-RELATED"/>
    <property type="match status" value="1"/>
</dbReference>
<dbReference type="PANTHER" id="PTHR33406:SF6">
    <property type="entry name" value="MEMBRANE PROTEIN YDGH-RELATED"/>
    <property type="match status" value="1"/>
</dbReference>
<dbReference type="Pfam" id="PF03176">
    <property type="entry name" value="MMPL"/>
    <property type="match status" value="2"/>
</dbReference>
<dbReference type="SUPFAM" id="SSF82866">
    <property type="entry name" value="Multidrug efflux transporter AcrB transmembrane domain"/>
    <property type="match status" value="2"/>
</dbReference>
<sequence>MIVQRTAAPTGSVPPDRHAARPFIPRMIRTFAVPIILGWLVTIAVLNVTVPQLETVGQIQAVSMSPDAAPSMISMKHIGKVFEEGDSDSAAMIVLEGQRPLGDAAHAFYDQMIGRLQADTTHVQSLQDFWGDPLTATGAQSSDGKAAYVQVKLAGNQGESLANESVEAVKTIVERLAPPPGVKVYVTGSAALVADQQQAGDRSLQVIEAVTFTVIIVMLLLVYRSIITSAIMLTMVVLGLLATRGGVAFLGFHRIIGLSTFATNLLVVLAIAAATDYAIFLIGRYQEARGLGQDRESAYYTMFGGTAHVVLGSGLTIAGATFCLSFTRLPYFQTLGVPLAIGMVIVVAAALTLGPAIIAVTSRFGKLLEPKRMARVRGWRKVGAAIVRWPGPILVGAVALALVGLLTLPGYRTNYNDRNYLPADLPANEGYAAAERHFSQARMNPEVLMVESDHDMRNSADFLVINKIAKAIFAVEGISRVQAITRPDGKPIEHTSIPFLISMQGTSQKLTEKYNQDLTARMLEQVNDIQSNIDQMERMHSLTQQMADVTHEMVIQMTGMVVDVEELRNHIADFDDFFRPIRSYFYWEKHCYDIPVCWSLRSVFDTLDGIDVMTEDINNLLPLMQRLDTLMPQLTAMMPEMIQTMKSMKAQMLSMHSTQEGLQDQMAAMQEDSAAMGEAFDASRNDDSFYLPPEVFDNPDFQRGLEQFLSPDGHAVRFIISHEGDPMSQAGIARIAKIKTAAKEAIKGTPLEGSAIYLGGTAAMFKDLSDGNTYDLMIAGISALCLIFIIMLITTRSVVAAAVIVGTVVLSLGASFGLSVLIWQHILGIELHWLVLAMAVIILLAVGADYNLLLVARLKEEIHAGINTGIIRAMGGSGSVVTAAGLVFAFTMMSFAVSELTVMAQVGTTIGMGLLFDTLIVRSFMTPSIAALLGKWFWWPQVVRQRPVPQPWPSPASARTFALV</sequence>
<organism>
    <name type="scientific">Mycobacterium tuberculosis (strain CDC 1551 / Oshkosh)</name>
    <dbReference type="NCBI Taxonomy" id="83331"/>
    <lineage>
        <taxon>Bacteria</taxon>
        <taxon>Bacillati</taxon>
        <taxon>Actinomycetota</taxon>
        <taxon>Actinomycetes</taxon>
        <taxon>Mycobacteriales</taxon>
        <taxon>Mycobacteriaceae</taxon>
        <taxon>Mycobacterium</taxon>
        <taxon>Mycobacterium tuberculosis complex</taxon>
    </lineage>
</organism>
<proteinExistence type="inferred from homology"/>
<protein>
    <recommendedName>
        <fullName evidence="1">Siderophore exporter MmpL5</fullName>
    </recommendedName>
</protein>
<keyword id="KW-0997">Cell inner membrane</keyword>
<keyword id="KW-1003">Cell membrane</keyword>
<keyword id="KW-0472">Membrane</keyword>
<keyword id="KW-1185">Reference proteome</keyword>
<keyword id="KW-0812">Transmembrane</keyword>
<keyword id="KW-1133">Transmembrane helix</keyword>
<keyword id="KW-0813">Transport</keyword>
<comment type="function">
    <text evidence="1">Part of an export system, which is required for biosynthesis and secretion of siderophores.</text>
</comment>
<comment type="subunit">
    <text evidence="1">Interacts with MmpS5.</text>
</comment>
<comment type="subcellular location">
    <subcellularLocation>
        <location evidence="1">Cell inner membrane</location>
        <topology evidence="2">Multi-pass membrane protein</topology>
    </subcellularLocation>
</comment>
<comment type="similarity">
    <text evidence="3">Belongs to the resistance-nodulation-cell division (RND) (TC 2.A.6) family. MmpL subfamily.</text>
</comment>
<reference key="1">
    <citation type="journal article" date="2002" name="J. Bacteriol.">
        <title>Whole-genome comparison of Mycobacterium tuberculosis clinical and laboratory strains.</title>
        <authorList>
            <person name="Fleischmann R.D."/>
            <person name="Alland D."/>
            <person name="Eisen J.A."/>
            <person name="Carpenter L."/>
            <person name="White O."/>
            <person name="Peterson J.D."/>
            <person name="DeBoy R.T."/>
            <person name="Dodson R.J."/>
            <person name="Gwinn M.L."/>
            <person name="Haft D.H."/>
            <person name="Hickey E.K."/>
            <person name="Kolonay J.F."/>
            <person name="Nelson W.C."/>
            <person name="Umayam L.A."/>
            <person name="Ermolaeva M.D."/>
            <person name="Salzberg S.L."/>
            <person name="Delcher A."/>
            <person name="Utterback T.R."/>
            <person name="Weidman J.F."/>
            <person name="Khouri H.M."/>
            <person name="Gill J."/>
            <person name="Mikula A."/>
            <person name="Bishai W."/>
            <person name="Jacobs W.R. Jr."/>
            <person name="Venter J.C."/>
            <person name="Fraser C.M."/>
        </authorList>
    </citation>
    <scope>NUCLEOTIDE SEQUENCE [LARGE SCALE GENOMIC DNA]</scope>
    <source>
        <strain>CDC 1551 / Oshkosh</strain>
    </source>
</reference>
<name>MMPL5_MYCTO</name>
<evidence type="ECO:0000250" key="1">
    <source>
        <dbReference type="UniProtKB" id="P9WJV1"/>
    </source>
</evidence>
<evidence type="ECO:0000255" key="2"/>
<evidence type="ECO:0000305" key="3"/>
<feature type="chain" id="PRO_0000427766" description="Siderophore exporter MmpL5">
    <location>
        <begin position="1"/>
        <end position="964"/>
    </location>
</feature>
<feature type="transmembrane region" description="Helical" evidence="2">
    <location>
        <begin position="31"/>
        <end position="51"/>
    </location>
</feature>
<feature type="transmembrane region" description="Helical" evidence="2">
    <location>
        <begin position="203"/>
        <end position="223"/>
    </location>
</feature>
<feature type="transmembrane region" description="Helical" evidence="2">
    <location>
        <begin position="230"/>
        <end position="250"/>
    </location>
</feature>
<feature type="transmembrane region" description="Helical" evidence="2">
    <location>
        <begin position="255"/>
        <end position="275"/>
    </location>
</feature>
<feature type="transmembrane region" description="Helical" evidence="2">
    <location>
        <begin position="302"/>
        <end position="322"/>
    </location>
</feature>
<feature type="transmembrane region" description="Helical" evidence="2">
    <location>
        <begin position="340"/>
        <end position="360"/>
    </location>
</feature>
<feature type="transmembrane region" description="Helical" evidence="2">
    <location>
        <begin position="389"/>
        <end position="409"/>
    </location>
</feature>
<feature type="transmembrane region" description="Helical" evidence="2">
    <location>
        <begin position="773"/>
        <end position="793"/>
    </location>
</feature>
<feature type="transmembrane region" description="Helical" evidence="2">
    <location>
        <begin position="803"/>
        <end position="823"/>
    </location>
</feature>
<feature type="transmembrane region" description="Helical" evidence="2">
    <location>
        <begin position="826"/>
        <end position="846"/>
    </location>
</feature>
<feature type="transmembrane region" description="Helical" evidence="2">
    <location>
        <begin position="880"/>
        <end position="900"/>
    </location>
</feature>
<feature type="transmembrane region" description="Helical" evidence="2">
    <location>
        <begin position="923"/>
        <end position="943"/>
    </location>
</feature>
<accession>P9WJV0</accession>
<accession>L0T659</accession>
<accession>O53784</accession>